<evidence type="ECO:0000255" key="1">
    <source>
        <dbReference type="HAMAP-Rule" id="MF_01967"/>
    </source>
</evidence>
<evidence type="ECO:0000255" key="2">
    <source>
        <dbReference type="PROSITE-ProRule" id="PRU00236"/>
    </source>
</evidence>
<protein>
    <recommendedName>
        <fullName evidence="1">NAD-dependent protein deacetylase</fullName>
        <ecNumber evidence="1 2">2.3.1.286</ecNumber>
    </recommendedName>
    <alternativeName>
        <fullName evidence="1">Regulatory protein SIR2 homolog</fullName>
    </alternativeName>
</protein>
<proteinExistence type="inferred from homology"/>
<sequence length="293" mass="32070">MTVAITQTGPALQEFIKRHQRLFVLSGAGCSTDSGIPDYRDLHGGWKRPQPVTFQAFMGELSTRQRYWARSLVGWPRFGLARPNATHHALAALEARGQLELLLTQNVDRLHQAAGSQAVIDLHGRLDVVRCMGCEQRMPRTEFQLLLERDNPGWADLEAAQAPDGDADLDSVAFDNFVVPACPACGCVLKPDVVFFGENVPRERVERAFAHLQAADAVLVVGSSLMVYSGFRFVQAAARAGLPIAALNFGRTRADDLLSLKVEQSCAQALAFLQQPPDPLHTATARYHSARSA</sequence>
<organism>
    <name type="scientific">Xanthomonas campestris pv. campestris (strain B100)</name>
    <dbReference type="NCBI Taxonomy" id="509169"/>
    <lineage>
        <taxon>Bacteria</taxon>
        <taxon>Pseudomonadati</taxon>
        <taxon>Pseudomonadota</taxon>
        <taxon>Gammaproteobacteria</taxon>
        <taxon>Lysobacterales</taxon>
        <taxon>Lysobacteraceae</taxon>
        <taxon>Xanthomonas</taxon>
    </lineage>
</organism>
<feature type="chain" id="PRO_1000137255" description="NAD-dependent protein deacetylase">
    <location>
        <begin position="1"/>
        <end position="293"/>
    </location>
</feature>
<feature type="domain" description="Deacetylase sirtuin-type" evidence="2">
    <location>
        <begin position="1"/>
        <end position="284"/>
    </location>
</feature>
<feature type="active site" description="Proton acceptor" evidence="2">
    <location>
        <position position="123"/>
    </location>
</feature>
<feature type="binding site" evidence="1">
    <location>
        <begin position="27"/>
        <end position="47"/>
    </location>
    <ligand>
        <name>NAD(+)</name>
        <dbReference type="ChEBI" id="CHEBI:57540"/>
    </ligand>
</feature>
<feature type="binding site" evidence="1">
    <location>
        <begin position="105"/>
        <end position="108"/>
    </location>
    <ligand>
        <name>NAD(+)</name>
        <dbReference type="ChEBI" id="CHEBI:57540"/>
    </ligand>
</feature>
<feature type="binding site" evidence="1">
    <location>
        <position position="131"/>
    </location>
    <ligand>
        <name>Zn(2+)</name>
        <dbReference type="ChEBI" id="CHEBI:29105"/>
    </ligand>
</feature>
<feature type="binding site" evidence="1">
    <location>
        <position position="134"/>
    </location>
    <ligand>
        <name>Zn(2+)</name>
        <dbReference type="ChEBI" id="CHEBI:29105"/>
    </ligand>
</feature>
<feature type="binding site" evidence="1">
    <location>
        <position position="182"/>
    </location>
    <ligand>
        <name>Zn(2+)</name>
        <dbReference type="ChEBI" id="CHEBI:29105"/>
    </ligand>
</feature>
<feature type="binding site" evidence="1">
    <location>
        <position position="185"/>
    </location>
    <ligand>
        <name>Zn(2+)</name>
        <dbReference type="ChEBI" id="CHEBI:29105"/>
    </ligand>
</feature>
<feature type="binding site" evidence="1">
    <location>
        <begin position="222"/>
        <end position="224"/>
    </location>
    <ligand>
        <name>NAD(+)</name>
        <dbReference type="ChEBI" id="CHEBI:57540"/>
    </ligand>
</feature>
<feature type="binding site" evidence="1">
    <location>
        <begin position="248"/>
        <end position="250"/>
    </location>
    <ligand>
        <name>NAD(+)</name>
        <dbReference type="ChEBI" id="CHEBI:57540"/>
    </ligand>
</feature>
<feature type="binding site" evidence="1">
    <location>
        <position position="266"/>
    </location>
    <ligand>
        <name>NAD(+)</name>
        <dbReference type="ChEBI" id="CHEBI:57540"/>
    </ligand>
</feature>
<accession>B0RM75</accession>
<name>NPD_XANCB</name>
<gene>
    <name evidence="1" type="primary">cobB</name>
    <name type="ordered locus">xcc-b100_0331</name>
</gene>
<comment type="function">
    <text evidence="1">NAD-dependent protein deacetylase which modulates the activities of several enzymes which are inactive in their acetylated form.</text>
</comment>
<comment type="catalytic activity">
    <reaction evidence="1">
        <text>N(6)-acetyl-L-lysyl-[protein] + NAD(+) + H2O = 2''-O-acetyl-ADP-D-ribose + nicotinamide + L-lysyl-[protein]</text>
        <dbReference type="Rhea" id="RHEA:43636"/>
        <dbReference type="Rhea" id="RHEA-COMP:9752"/>
        <dbReference type="Rhea" id="RHEA-COMP:10731"/>
        <dbReference type="ChEBI" id="CHEBI:15377"/>
        <dbReference type="ChEBI" id="CHEBI:17154"/>
        <dbReference type="ChEBI" id="CHEBI:29969"/>
        <dbReference type="ChEBI" id="CHEBI:57540"/>
        <dbReference type="ChEBI" id="CHEBI:61930"/>
        <dbReference type="ChEBI" id="CHEBI:83767"/>
        <dbReference type="EC" id="2.3.1.286"/>
    </reaction>
</comment>
<comment type="cofactor">
    <cofactor evidence="1">
        <name>Zn(2+)</name>
        <dbReference type="ChEBI" id="CHEBI:29105"/>
    </cofactor>
    <text evidence="1">Binds 1 zinc ion per subunit.</text>
</comment>
<comment type="subcellular location">
    <subcellularLocation>
        <location evidence="1">Cytoplasm</location>
    </subcellularLocation>
</comment>
<comment type="similarity">
    <text evidence="1">Belongs to the sirtuin family. Class II subfamily.</text>
</comment>
<keyword id="KW-0963">Cytoplasm</keyword>
<keyword id="KW-0479">Metal-binding</keyword>
<keyword id="KW-0520">NAD</keyword>
<keyword id="KW-0808">Transferase</keyword>
<keyword id="KW-0862">Zinc</keyword>
<reference key="1">
    <citation type="journal article" date="2008" name="J. Biotechnol.">
        <title>The genome of Xanthomonas campestris pv. campestris B100 and its use for the reconstruction of metabolic pathways involved in xanthan biosynthesis.</title>
        <authorList>
            <person name="Vorhoelter F.-J."/>
            <person name="Schneiker S."/>
            <person name="Goesmann A."/>
            <person name="Krause L."/>
            <person name="Bekel T."/>
            <person name="Kaiser O."/>
            <person name="Linke B."/>
            <person name="Patschkowski T."/>
            <person name="Rueckert C."/>
            <person name="Schmid J."/>
            <person name="Sidhu V.K."/>
            <person name="Sieber V."/>
            <person name="Tauch A."/>
            <person name="Watt S.A."/>
            <person name="Weisshaar B."/>
            <person name="Becker A."/>
            <person name="Niehaus K."/>
            <person name="Puehler A."/>
        </authorList>
    </citation>
    <scope>NUCLEOTIDE SEQUENCE [LARGE SCALE GENOMIC DNA]</scope>
    <source>
        <strain>B100</strain>
    </source>
</reference>
<dbReference type="EC" id="2.3.1.286" evidence="1 2"/>
<dbReference type="EMBL" id="AM920689">
    <property type="protein sequence ID" value="CAP49662.1"/>
    <property type="molecule type" value="Genomic_DNA"/>
</dbReference>
<dbReference type="SMR" id="B0RM75"/>
<dbReference type="KEGG" id="xca:xcc-b100_0331"/>
<dbReference type="HOGENOM" id="CLU_023643_3_2_6"/>
<dbReference type="Proteomes" id="UP000001188">
    <property type="component" value="Chromosome"/>
</dbReference>
<dbReference type="GO" id="GO:0005737">
    <property type="term" value="C:cytoplasm"/>
    <property type="evidence" value="ECO:0007669"/>
    <property type="project" value="UniProtKB-SubCell"/>
</dbReference>
<dbReference type="GO" id="GO:0017136">
    <property type="term" value="F:histone deacetylase activity, NAD-dependent"/>
    <property type="evidence" value="ECO:0007669"/>
    <property type="project" value="TreeGrafter"/>
</dbReference>
<dbReference type="GO" id="GO:0070403">
    <property type="term" value="F:NAD+ binding"/>
    <property type="evidence" value="ECO:0007669"/>
    <property type="project" value="UniProtKB-UniRule"/>
</dbReference>
<dbReference type="GO" id="GO:0008270">
    <property type="term" value="F:zinc ion binding"/>
    <property type="evidence" value="ECO:0007669"/>
    <property type="project" value="UniProtKB-UniRule"/>
</dbReference>
<dbReference type="CDD" id="cd01409">
    <property type="entry name" value="SIRT4"/>
    <property type="match status" value="1"/>
</dbReference>
<dbReference type="Gene3D" id="3.30.1600.10">
    <property type="entry name" value="SIR2/SIRT2 'Small Domain"/>
    <property type="match status" value="1"/>
</dbReference>
<dbReference type="Gene3D" id="3.40.50.1220">
    <property type="entry name" value="TPP-binding domain"/>
    <property type="match status" value="1"/>
</dbReference>
<dbReference type="HAMAP" id="MF_01967">
    <property type="entry name" value="Sirtuin_ClassII"/>
    <property type="match status" value="1"/>
</dbReference>
<dbReference type="InterPro" id="IPR029035">
    <property type="entry name" value="DHS-like_NAD/FAD-binding_dom"/>
</dbReference>
<dbReference type="InterPro" id="IPR050134">
    <property type="entry name" value="NAD-dep_sirtuin_deacylases"/>
</dbReference>
<dbReference type="InterPro" id="IPR003000">
    <property type="entry name" value="Sirtuin"/>
</dbReference>
<dbReference type="InterPro" id="IPR026591">
    <property type="entry name" value="Sirtuin_cat_small_dom_sf"/>
</dbReference>
<dbReference type="InterPro" id="IPR026587">
    <property type="entry name" value="Sirtuin_class_II"/>
</dbReference>
<dbReference type="InterPro" id="IPR026590">
    <property type="entry name" value="Ssirtuin_cat_dom"/>
</dbReference>
<dbReference type="NCBIfam" id="NF003738">
    <property type="entry name" value="PRK05333.1"/>
    <property type="match status" value="1"/>
</dbReference>
<dbReference type="PANTHER" id="PTHR11085">
    <property type="entry name" value="NAD-DEPENDENT PROTEIN DEACYLASE SIRTUIN-5, MITOCHONDRIAL-RELATED"/>
    <property type="match status" value="1"/>
</dbReference>
<dbReference type="PANTHER" id="PTHR11085:SF10">
    <property type="entry name" value="NAD-DEPENDENT PROTEIN DEACYLASE SIRTUIN-5, MITOCHONDRIAL-RELATED"/>
    <property type="match status" value="1"/>
</dbReference>
<dbReference type="Pfam" id="PF02146">
    <property type="entry name" value="SIR2"/>
    <property type="match status" value="1"/>
</dbReference>
<dbReference type="SUPFAM" id="SSF52467">
    <property type="entry name" value="DHS-like NAD/FAD-binding domain"/>
    <property type="match status" value="1"/>
</dbReference>
<dbReference type="PROSITE" id="PS50305">
    <property type="entry name" value="SIRTUIN"/>
    <property type="match status" value="1"/>
</dbReference>